<protein>
    <recommendedName>
        <fullName evidence="2">Speedy protein E9</fullName>
    </recommendedName>
</protein>
<proteinExistence type="inferred from homology"/>
<organism>
    <name type="scientific">Homo sapiens</name>
    <name type="common">Human</name>
    <dbReference type="NCBI Taxonomy" id="9606"/>
    <lineage>
        <taxon>Eukaryota</taxon>
        <taxon>Metazoa</taxon>
        <taxon>Chordata</taxon>
        <taxon>Craniata</taxon>
        <taxon>Vertebrata</taxon>
        <taxon>Euteleostomi</taxon>
        <taxon>Mammalia</taxon>
        <taxon>Eutheria</taxon>
        <taxon>Euarchontoglires</taxon>
        <taxon>Primates</taxon>
        <taxon>Haplorrhini</taxon>
        <taxon>Catarrhini</taxon>
        <taxon>Hominidae</taxon>
        <taxon>Homo</taxon>
    </lineage>
</organism>
<reference key="1">
    <citation type="journal article" date="2003" name="Nature">
        <title>The DNA sequence of human chromosome 7.</title>
        <authorList>
            <person name="Hillier L.W."/>
            <person name="Fulton R.S."/>
            <person name="Fulton L.A."/>
            <person name="Graves T.A."/>
            <person name="Pepin K.H."/>
            <person name="Wagner-McPherson C."/>
            <person name="Layman D."/>
            <person name="Maas J."/>
            <person name="Jaeger S."/>
            <person name="Walker R."/>
            <person name="Wylie K."/>
            <person name="Sekhon M."/>
            <person name="Becker M.C."/>
            <person name="O'Laughlin M.D."/>
            <person name="Schaller M.E."/>
            <person name="Fewell G.A."/>
            <person name="Delehaunty K.D."/>
            <person name="Miner T.L."/>
            <person name="Nash W.E."/>
            <person name="Cordes M."/>
            <person name="Du H."/>
            <person name="Sun H."/>
            <person name="Edwards J."/>
            <person name="Bradshaw-Cordum H."/>
            <person name="Ali J."/>
            <person name="Andrews S."/>
            <person name="Isak A."/>
            <person name="Vanbrunt A."/>
            <person name="Nguyen C."/>
            <person name="Du F."/>
            <person name="Lamar B."/>
            <person name="Courtney L."/>
            <person name="Kalicki J."/>
            <person name="Ozersky P."/>
            <person name="Bielicki L."/>
            <person name="Scott K."/>
            <person name="Holmes A."/>
            <person name="Harkins R."/>
            <person name="Harris A."/>
            <person name="Strong C.M."/>
            <person name="Hou S."/>
            <person name="Tomlinson C."/>
            <person name="Dauphin-Kohlberg S."/>
            <person name="Kozlowicz-Reilly A."/>
            <person name="Leonard S."/>
            <person name="Rohlfing T."/>
            <person name="Rock S.M."/>
            <person name="Tin-Wollam A.-M."/>
            <person name="Abbott A."/>
            <person name="Minx P."/>
            <person name="Maupin R."/>
            <person name="Strowmatt C."/>
            <person name="Latreille P."/>
            <person name="Miller N."/>
            <person name="Johnson D."/>
            <person name="Murray J."/>
            <person name="Woessner J.P."/>
            <person name="Wendl M.C."/>
            <person name="Yang S.-P."/>
            <person name="Schultz B.R."/>
            <person name="Wallis J.W."/>
            <person name="Spieth J."/>
            <person name="Bieri T.A."/>
            <person name="Nelson J.O."/>
            <person name="Berkowicz N."/>
            <person name="Wohldmann P.E."/>
            <person name="Cook L.L."/>
            <person name="Hickenbotham M.T."/>
            <person name="Eldred J."/>
            <person name="Williams D."/>
            <person name="Bedell J.A."/>
            <person name="Mardis E.R."/>
            <person name="Clifton S.W."/>
            <person name="Chissoe S.L."/>
            <person name="Marra M.A."/>
            <person name="Raymond C."/>
            <person name="Haugen E."/>
            <person name="Gillett W."/>
            <person name="Zhou Y."/>
            <person name="James R."/>
            <person name="Phelps K."/>
            <person name="Iadanoto S."/>
            <person name="Bubb K."/>
            <person name="Simms E."/>
            <person name="Levy R."/>
            <person name="Clendenning J."/>
            <person name="Kaul R."/>
            <person name="Kent W.J."/>
            <person name="Furey T.S."/>
            <person name="Baertsch R.A."/>
            <person name="Brent M.R."/>
            <person name="Keibler E."/>
            <person name="Flicek P."/>
            <person name="Bork P."/>
            <person name="Suyama M."/>
            <person name="Bailey J.A."/>
            <person name="Portnoy M.E."/>
            <person name="Torrents D."/>
            <person name="Chinwalla A.T."/>
            <person name="Gish W.R."/>
            <person name="Eddy S.R."/>
            <person name="McPherson J.D."/>
            <person name="Olson M.V."/>
            <person name="Eichler E.E."/>
            <person name="Green E.D."/>
            <person name="Waterston R.H."/>
            <person name="Wilson R.K."/>
        </authorList>
    </citation>
    <scope>NUCLEOTIDE SEQUENCE [LARGE SCALE GENOMIC DNA]</scope>
</reference>
<dbReference type="EMBL" id="AC211476">
    <property type="status" value="NOT_ANNOTATED_CDS"/>
    <property type="molecule type" value="Genomic_DNA"/>
</dbReference>
<dbReference type="RefSeq" id="NP_001369483.1">
    <property type="nucleotide sequence ID" value="NM_001382554.3"/>
</dbReference>
<dbReference type="RefSeq" id="XP_006716273.1">
    <property type="nucleotide sequence ID" value="XM_006716210.3"/>
</dbReference>
<dbReference type="RefSeq" id="XP_006716275.1">
    <property type="nucleotide sequence ID" value="XM_006716212.3"/>
</dbReference>
<dbReference type="RefSeq" id="XP_006726497.1">
    <property type="nucleotide sequence ID" value="XM_006726434.3"/>
</dbReference>
<dbReference type="RefSeq" id="XP_016868377.1">
    <property type="nucleotide sequence ID" value="XM_017012888.1"/>
</dbReference>
<dbReference type="RefSeq" id="XP_016868422.1">
    <property type="nucleotide sequence ID" value="XM_017012933.1"/>
</dbReference>
<dbReference type="RefSeq" id="XP_016885939.1">
    <property type="nucleotide sequence ID" value="XM_017030450.1"/>
</dbReference>
<dbReference type="RefSeq" id="XP_047276664.1">
    <property type="nucleotide sequence ID" value="XM_047420708.1"/>
</dbReference>
<dbReference type="SMR" id="A0A494C191"/>
<dbReference type="MassIVE" id="A0A494C191"/>
<dbReference type="Ensembl" id="ENST00000575125.6">
    <property type="protein sequence ID" value="ENSP00000498945.1"/>
    <property type="gene ID" value="ENSG00000262461.7"/>
</dbReference>
<dbReference type="GeneID" id="643909"/>
<dbReference type="MANE-Select" id="ENST00000575125.6">
    <property type="protein sequence ID" value="ENSP00000498945.1"/>
    <property type="RefSeq nucleotide sequence ID" value="NM_001382554.3"/>
    <property type="RefSeq protein sequence ID" value="NP_001369483.1"/>
</dbReference>
<dbReference type="AGR" id="HGNC:45034"/>
<dbReference type="GeneCards" id="SPDYE9"/>
<dbReference type="HGNC" id="HGNC:45034">
    <property type="gene designation" value="SPDYE9"/>
</dbReference>
<dbReference type="HPA" id="ENSG00000262461">
    <property type="expression patterns" value="Not detected"/>
</dbReference>
<dbReference type="neXtProt" id="NX_A0A494C191"/>
<dbReference type="VEuPathDB" id="HostDB:ENSG00000262461"/>
<dbReference type="VEuPathDB" id="HostDB:ENSG00000273520"/>
<dbReference type="VEuPathDB" id="HostDB:ENSG00000286228"/>
<dbReference type="InParanoid" id="A0A494C191"/>
<dbReference type="OrthoDB" id="9442170at2759"/>
<dbReference type="Proteomes" id="UP000005640">
    <property type="component" value="Chromosome 7"/>
</dbReference>
<dbReference type="Bgee" id="ENSG00000262461">
    <property type="expression patterns" value="Expressed in stromal cell of endometrium and 97 other cell types or tissues"/>
</dbReference>
<dbReference type="ExpressionAtlas" id="A0A494C191">
    <property type="expression patterns" value="baseline"/>
</dbReference>
<dbReference type="GO" id="GO:0019901">
    <property type="term" value="F:protein kinase binding"/>
    <property type="evidence" value="ECO:0000318"/>
    <property type="project" value="GO_Central"/>
</dbReference>
<dbReference type="InterPro" id="IPR020984">
    <property type="entry name" value="Speedy"/>
</dbReference>
<dbReference type="PANTHER" id="PTHR31156">
    <property type="entry name" value="WBSCR19-LIKE PROTEIN"/>
    <property type="match status" value="1"/>
</dbReference>
<dbReference type="Pfam" id="PF11357">
    <property type="entry name" value="Spy1"/>
    <property type="match status" value="1"/>
</dbReference>
<accession>A0A494C191</accession>
<comment type="similarity">
    <text evidence="2">Belongs to the Speedy/Ringo family.</text>
</comment>
<gene>
    <name evidence="3" type="primary">SPDYE9</name>
</gene>
<name>SPD9_HUMAN</name>
<sequence>MGQILGKIMMSHQPQPQEERSPQRSTSGYPLQEVVDDEVSGPSAPGVDPSPPRRSLGWKRKRECLDESDDEPEKELAPEPEETWVAETLCGLKMKAKRRRVSLVLPEYYEAFNRLLEDPVIKRLLAWDKDLRVSDKYLLAMVIAYFSRAGLPSWQYQRIHFFLALYLANDMEEDDEAPKQNIFYFLYEETRSHIPLLSELWFQLCRYMNPRARKNCSQIALFRKYRFHFFCSMRCRAWVSLEELEEIQAYDPEHWVWARDRAHLS</sequence>
<feature type="chain" id="PRO_0000451618" description="Speedy protein E9">
    <location>
        <begin position="1"/>
        <end position="265"/>
    </location>
</feature>
<feature type="region of interest" description="Disordered" evidence="1">
    <location>
        <begin position="1"/>
        <end position="80"/>
    </location>
</feature>
<feature type="compositionally biased region" description="Acidic residues" evidence="1">
    <location>
        <begin position="66"/>
        <end position="80"/>
    </location>
</feature>
<evidence type="ECO:0000256" key="1">
    <source>
        <dbReference type="SAM" id="MobiDB-lite"/>
    </source>
</evidence>
<evidence type="ECO:0000305" key="2"/>
<evidence type="ECO:0000312" key="3">
    <source>
        <dbReference type="HGNC" id="HGNC:45034"/>
    </source>
</evidence>
<keyword id="KW-1185">Reference proteome</keyword>